<dbReference type="EMBL" id="CP000950">
    <property type="protein sequence ID" value="ACA70049.1"/>
    <property type="molecule type" value="Genomic_DNA"/>
</dbReference>
<dbReference type="RefSeq" id="WP_002210155.1">
    <property type="nucleotide sequence ID" value="NZ_CP009792.1"/>
</dbReference>
<dbReference type="SMR" id="B1JMM2"/>
<dbReference type="GeneID" id="98391335"/>
<dbReference type="KEGG" id="ypy:YPK_3782"/>
<dbReference type="PATRIC" id="fig|502800.11.peg.132"/>
<dbReference type="GO" id="GO:0022627">
    <property type="term" value="C:cytosolic small ribosomal subunit"/>
    <property type="evidence" value="ECO:0007669"/>
    <property type="project" value="TreeGrafter"/>
</dbReference>
<dbReference type="GO" id="GO:0070181">
    <property type="term" value="F:small ribosomal subunit rRNA binding"/>
    <property type="evidence" value="ECO:0007669"/>
    <property type="project" value="TreeGrafter"/>
</dbReference>
<dbReference type="GO" id="GO:0003735">
    <property type="term" value="F:structural constituent of ribosome"/>
    <property type="evidence" value="ECO:0007669"/>
    <property type="project" value="InterPro"/>
</dbReference>
<dbReference type="GO" id="GO:0006412">
    <property type="term" value="P:translation"/>
    <property type="evidence" value="ECO:0007669"/>
    <property type="project" value="UniProtKB-UniRule"/>
</dbReference>
<dbReference type="FunFam" id="4.10.640.10:FF:000001">
    <property type="entry name" value="30S ribosomal protein S18"/>
    <property type="match status" value="1"/>
</dbReference>
<dbReference type="Gene3D" id="4.10.640.10">
    <property type="entry name" value="Ribosomal protein S18"/>
    <property type="match status" value="1"/>
</dbReference>
<dbReference type="HAMAP" id="MF_00270">
    <property type="entry name" value="Ribosomal_bS18"/>
    <property type="match status" value="1"/>
</dbReference>
<dbReference type="InterPro" id="IPR001648">
    <property type="entry name" value="Ribosomal_bS18"/>
</dbReference>
<dbReference type="InterPro" id="IPR018275">
    <property type="entry name" value="Ribosomal_bS18_CS"/>
</dbReference>
<dbReference type="InterPro" id="IPR036870">
    <property type="entry name" value="Ribosomal_bS18_sf"/>
</dbReference>
<dbReference type="NCBIfam" id="TIGR00165">
    <property type="entry name" value="S18"/>
    <property type="match status" value="1"/>
</dbReference>
<dbReference type="PANTHER" id="PTHR13479">
    <property type="entry name" value="30S RIBOSOMAL PROTEIN S18"/>
    <property type="match status" value="1"/>
</dbReference>
<dbReference type="PANTHER" id="PTHR13479:SF40">
    <property type="entry name" value="SMALL RIBOSOMAL SUBUNIT PROTEIN BS18M"/>
    <property type="match status" value="1"/>
</dbReference>
<dbReference type="Pfam" id="PF01084">
    <property type="entry name" value="Ribosomal_S18"/>
    <property type="match status" value="1"/>
</dbReference>
<dbReference type="PRINTS" id="PR00974">
    <property type="entry name" value="RIBOSOMALS18"/>
</dbReference>
<dbReference type="SUPFAM" id="SSF46911">
    <property type="entry name" value="Ribosomal protein S18"/>
    <property type="match status" value="1"/>
</dbReference>
<dbReference type="PROSITE" id="PS00057">
    <property type="entry name" value="RIBOSOMAL_S18"/>
    <property type="match status" value="1"/>
</dbReference>
<sequence>MARYFRRRKFCRFTAEGVVEIDYKDIATLKNYITESGKIVPSRITGTRAKYQRQLARCIKRARYLSLLPYTDRHQ</sequence>
<accession>B1JMM2</accession>
<feature type="chain" id="PRO_1000114472" description="Small ribosomal subunit protein bS18">
    <location>
        <begin position="1"/>
        <end position="75"/>
    </location>
</feature>
<keyword id="KW-0687">Ribonucleoprotein</keyword>
<keyword id="KW-0689">Ribosomal protein</keyword>
<keyword id="KW-0694">RNA-binding</keyword>
<keyword id="KW-0699">rRNA-binding</keyword>
<organism>
    <name type="scientific">Yersinia pseudotuberculosis serotype O:3 (strain YPIII)</name>
    <dbReference type="NCBI Taxonomy" id="502800"/>
    <lineage>
        <taxon>Bacteria</taxon>
        <taxon>Pseudomonadati</taxon>
        <taxon>Pseudomonadota</taxon>
        <taxon>Gammaproteobacteria</taxon>
        <taxon>Enterobacterales</taxon>
        <taxon>Yersiniaceae</taxon>
        <taxon>Yersinia</taxon>
    </lineage>
</organism>
<proteinExistence type="inferred from homology"/>
<reference key="1">
    <citation type="submission" date="2008-02" db="EMBL/GenBank/DDBJ databases">
        <title>Complete sequence of Yersinia pseudotuberculosis YPIII.</title>
        <authorList>
            <consortium name="US DOE Joint Genome Institute"/>
            <person name="Copeland A."/>
            <person name="Lucas S."/>
            <person name="Lapidus A."/>
            <person name="Glavina del Rio T."/>
            <person name="Dalin E."/>
            <person name="Tice H."/>
            <person name="Bruce D."/>
            <person name="Goodwin L."/>
            <person name="Pitluck S."/>
            <person name="Munk A.C."/>
            <person name="Brettin T."/>
            <person name="Detter J.C."/>
            <person name="Han C."/>
            <person name="Tapia R."/>
            <person name="Schmutz J."/>
            <person name="Larimer F."/>
            <person name="Land M."/>
            <person name="Hauser L."/>
            <person name="Challacombe J.F."/>
            <person name="Green L."/>
            <person name="Lindler L.E."/>
            <person name="Nikolich M.P."/>
            <person name="Richardson P."/>
        </authorList>
    </citation>
    <scope>NUCLEOTIDE SEQUENCE [LARGE SCALE GENOMIC DNA]</scope>
    <source>
        <strain>YPIII</strain>
    </source>
</reference>
<gene>
    <name evidence="1" type="primary">rpsR</name>
    <name type="ordered locus">YPK_3782</name>
</gene>
<protein>
    <recommendedName>
        <fullName evidence="1">Small ribosomal subunit protein bS18</fullName>
    </recommendedName>
    <alternativeName>
        <fullName evidence="2">30S ribosomal protein S18</fullName>
    </alternativeName>
</protein>
<name>RS18_YERPY</name>
<evidence type="ECO:0000255" key="1">
    <source>
        <dbReference type="HAMAP-Rule" id="MF_00270"/>
    </source>
</evidence>
<evidence type="ECO:0000305" key="2"/>
<comment type="function">
    <text evidence="1">Binds as a heterodimer with protein bS6 to the central domain of the 16S rRNA, where it helps stabilize the platform of the 30S subunit.</text>
</comment>
<comment type="subunit">
    <text evidence="1">Part of the 30S ribosomal subunit. Forms a tight heterodimer with protein bS6.</text>
</comment>
<comment type="similarity">
    <text evidence="1">Belongs to the bacterial ribosomal protein bS18 family.</text>
</comment>